<sequence>MSAIAPGMILIAYLCGSISSAILVCRLCGLPDPRTSGSGNPGATNVLRIGGKGAAVAVLIFDVLKGMLPVWGAYELGVSPFWLGLIAIAACLGHIWPVFFGFKGGKGVATAFGAIAPIGWDLTGVMAGTWLLTVLLSGYSSLGAIVSALIAPFYVWWFKPQFTFPVSMLSCLILLRHHDNIQRLWRRQETKIWTKFKRKREKDPE</sequence>
<proteinExistence type="inferred from homology"/>
<gene>
    <name evidence="1" type="primary">plsY</name>
    <name type="synonym">ygiH</name>
    <name type="ordered locus">EcE24377A_3522</name>
</gene>
<dbReference type="EC" id="2.3.1.15" evidence="1"/>
<dbReference type="EC" id="2.3.1.n5" evidence="1"/>
<dbReference type="EMBL" id="CP000800">
    <property type="protein sequence ID" value="ABV18635.1"/>
    <property type="molecule type" value="Genomic_DNA"/>
</dbReference>
<dbReference type="RefSeq" id="WP_001272796.1">
    <property type="nucleotide sequence ID" value="NC_009801.1"/>
</dbReference>
<dbReference type="SMR" id="A7ZRU0"/>
<dbReference type="GeneID" id="93778934"/>
<dbReference type="KEGG" id="ecw:EcE24377A_3522"/>
<dbReference type="HOGENOM" id="CLU_081254_0_2_6"/>
<dbReference type="UniPathway" id="UPA00085"/>
<dbReference type="Proteomes" id="UP000001122">
    <property type="component" value="Chromosome"/>
</dbReference>
<dbReference type="GO" id="GO:0005886">
    <property type="term" value="C:plasma membrane"/>
    <property type="evidence" value="ECO:0007669"/>
    <property type="project" value="UniProtKB-SubCell"/>
</dbReference>
<dbReference type="GO" id="GO:0043772">
    <property type="term" value="F:acyl-phosphate glycerol-3-phosphate acyltransferase activity"/>
    <property type="evidence" value="ECO:0007669"/>
    <property type="project" value="InterPro"/>
</dbReference>
<dbReference type="GO" id="GO:0004366">
    <property type="term" value="F:glycerol-3-phosphate O-acyltransferase activity"/>
    <property type="evidence" value="ECO:0007669"/>
    <property type="project" value="UniProtKB-UniRule"/>
</dbReference>
<dbReference type="GO" id="GO:0008654">
    <property type="term" value="P:phospholipid biosynthetic process"/>
    <property type="evidence" value="ECO:0007669"/>
    <property type="project" value="UniProtKB-UniRule"/>
</dbReference>
<dbReference type="HAMAP" id="MF_01043">
    <property type="entry name" value="PlsY"/>
    <property type="match status" value="1"/>
</dbReference>
<dbReference type="InterPro" id="IPR003811">
    <property type="entry name" value="G3P_acylTferase_PlsY"/>
</dbReference>
<dbReference type="NCBIfam" id="TIGR00023">
    <property type="entry name" value="glycerol-3-phosphate 1-O-acyltransferase PlsY"/>
    <property type="match status" value="1"/>
</dbReference>
<dbReference type="PANTHER" id="PTHR30309:SF0">
    <property type="entry name" value="GLYCEROL-3-PHOSPHATE ACYLTRANSFERASE-RELATED"/>
    <property type="match status" value="1"/>
</dbReference>
<dbReference type="PANTHER" id="PTHR30309">
    <property type="entry name" value="INNER MEMBRANE PROTEIN YGIH"/>
    <property type="match status" value="1"/>
</dbReference>
<dbReference type="Pfam" id="PF02660">
    <property type="entry name" value="G3P_acyltransf"/>
    <property type="match status" value="1"/>
</dbReference>
<dbReference type="SMART" id="SM01207">
    <property type="entry name" value="G3P_acyltransf"/>
    <property type="match status" value="1"/>
</dbReference>
<reference key="1">
    <citation type="journal article" date="2008" name="J. Bacteriol.">
        <title>The pangenome structure of Escherichia coli: comparative genomic analysis of E. coli commensal and pathogenic isolates.</title>
        <authorList>
            <person name="Rasko D.A."/>
            <person name="Rosovitz M.J."/>
            <person name="Myers G.S.A."/>
            <person name="Mongodin E.F."/>
            <person name="Fricke W.F."/>
            <person name="Gajer P."/>
            <person name="Crabtree J."/>
            <person name="Sebaihia M."/>
            <person name="Thomson N.R."/>
            <person name="Chaudhuri R."/>
            <person name="Henderson I.R."/>
            <person name="Sperandio V."/>
            <person name="Ravel J."/>
        </authorList>
    </citation>
    <scope>NUCLEOTIDE SEQUENCE [LARGE SCALE GENOMIC DNA]</scope>
    <source>
        <strain>E24377A / ETEC</strain>
    </source>
</reference>
<name>PLSY_ECO24</name>
<accession>A7ZRU0</accession>
<evidence type="ECO:0000255" key="1">
    <source>
        <dbReference type="HAMAP-Rule" id="MF_01043"/>
    </source>
</evidence>
<feature type="chain" id="PRO_1000064169" description="Glycerol-3-phosphate acyltransferase">
    <location>
        <begin position="1"/>
        <end position="205"/>
    </location>
</feature>
<feature type="topological domain" description="Periplasmic" evidence="1">
    <location>
        <begin position="1"/>
        <end position="3"/>
    </location>
</feature>
<feature type="transmembrane region" description="Helical" evidence="1">
    <location>
        <begin position="4"/>
        <end position="24"/>
    </location>
</feature>
<feature type="topological domain" description="Cytoplasmic" evidence="1">
    <location>
        <begin position="25"/>
        <end position="52"/>
    </location>
</feature>
<feature type="transmembrane region" description="Helical" evidence="1">
    <location>
        <begin position="53"/>
        <end position="73"/>
    </location>
</feature>
<feature type="topological domain" description="Periplasmic" evidence="1">
    <location>
        <begin position="74"/>
        <end position="80"/>
    </location>
</feature>
<feature type="transmembrane region" description="Helical" evidence="1">
    <location>
        <begin position="81"/>
        <end position="101"/>
    </location>
</feature>
<feature type="topological domain" description="Cytoplasmic" evidence="1">
    <location>
        <begin position="102"/>
        <end position="111"/>
    </location>
</feature>
<feature type="transmembrane region" description="Helical" evidence="1">
    <location>
        <begin position="112"/>
        <end position="132"/>
    </location>
</feature>
<feature type="topological domain" description="Periplasmic" evidence="1">
    <location>
        <begin position="133"/>
        <end position="137"/>
    </location>
</feature>
<feature type="transmembrane region" description="Helical" evidence="1">
    <location>
        <begin position="138"/>
        <end position="158"/>
    </location>
</feature>
<feature type="topological domain" description="Cytoplasmic" evidence="1">
    <location>
        <begin position="159"/>
        <end position="205"/>
    </location>
</feature>
<keyword id="KW-0997">Cell inner membrane</keyword>
<keyword id="KW-1003">Cell membrane</keyword>
<keyword id="KW-0444">Lipid biosynthesis</keyword>
<keyword id="KW-0443">Lipid metabolism</keyword>
<keyword id="KW-0472">Membrane</keyword>
<keyword id="KW-0594">Phospholipid biosynthesis</keyword>
<keyword id="KW-1208">Phospholipid metabolism</keyword>
<keyword id="KW-1185">Reference proteome</keyword>
<keyword id="KW-0808">Transferase</keyword>
<keyword id="KW-0812">Transmembrane</keyword>
<keyword id="KW-1133">Transmembrane helix</keyword>
<organism>
    <name type="scientific">Escherichia coli O139:H28 (strain E24377A / ETEC)</name>
    <dbReference type="NCBI Taxonomy" id="331111"/>
    <lineage>
        <taxon>Bacteria</taxon>
        <taxon>Pseudomonadati</taxon>
        <taxon>Pseudomonadota</taxon>
        <taxon>Gammaproteobacteria</taxon>
        <taxon>Enterobacterales</taxon>
        <taxon>Enterobacteriaceae</taxon>
        <taxon>Escherichia</taxon>
    </lineage>
</organism>
<comment type="function">
    <text evidence="1">Catalyzes the transfer of an acyl group from acyl-ACP to glycerol-3-phosphate (G3P) to form lysophosphatidic acid (LPA). This enzyme can also utilize acyl-CoA as fatty acyl donor, but not acyl-PO(4).</text>
</comment>
<comment type="catalytic activity">
    <reaction evidence="1">
        <text>sn-glycerol 3-phosphate + an acyl-CoA = a 1-acyl-sn-glycero-3-phosphate + CoA</text>
        <dbReference type="Rhea" id="RHEA:15325"/>
        <dbReference type="ChEBI" id="CHEBI:57287"/>
        <dbReference type="ChEBI" id="CHEBI:57597"/>
        <dbReference type="ChEBI" id="CHEBI:57970"/>
        <dbReference type="ChEBI" id="CHEBI:58342"/>
        <dbReference type="EC" id="2.3.1.15"/>
    </reaction>
</comment>
<comment type="catalytic activity">
    <reaction evidence="1">
        <text>a fatty acyl-[ACP] + sn-glycerol 3-phosphate = a 1-acyl-sn-glycero-3-phosphate + holo-[ACP]</text>
        <dbReference type="Rhea" id="RHEA:42300"/>
        <dbReference type="Rhea" id="RHEA-COMP:9685"/>
        <dbReference type="Rhea" id="RHEA-COMP:14125"/>
        <dbReference type="ChEBI" id="CHEBI:57597"/>
        <dbReference type="ChEBI" id="CHEBI:57970"/>
        <dbReference type="ChEBI" id="CHEBI:64479"/>
        <dbReference type="ChEBI" id="CHEBI:138651"/>
        <dbReference type="EC" id="2.3.1.n5"/>
    </reaction>
</comment>
<comment type="pathway">
    <text evidence="1">Lipid metabolism; phospholipid metabolism.</text>
</comment>
<comment type="subunit">
    <text evidence="1">Probably interacts with PlsX.</text>
</comment>
<comment type="subcellular location">
    <subcellularLocation>
        <location evidence="1">Cell inner membrane</location>
        <topology evidence="1">Multi-pass membrane protein</topology>
    </subcellularLocation>
</comment>
<comment type="similarity">
    <text evidence="1">Belongs to the PlsY family.</text>
</comment>
<protein>
    <recommendedName>
        <fullName evidence="1">Glycerol-3-phosphate acyltransferase</fullName>
    </recommendedName>
    <alternativeName>
        <fullName evidence="1">G3P acyltransferase</fullName>
        <shortName evidence="1">GPAT</shortName>
        <ecNumber evidence="1">2.3.1.15</ecNumber>
        <ecNumber evidence="1">2.3.1.n5</ecNumber>
    </alternativeName>
    <alternativeName>
        <fullName evidence="1">Lysophosphatidic acid synthase</fullName>
        <shortName evidence="1">LPA synthase</shortName>
    </alternativeName>
</protein>